<evidence type="ECO:0000250" key="1"/>
<evidence type="ECO:0000255" key="2"/>
<evidence type="ECO:0000255" key="3">
    <source>
        <dbReference type="PROSITE-ProRule" id="PRU10067"/>
    </source>
</evidence>
<evidence type="ECO:0000305" key="4"/>
<protein>
    <recommendedName>
        <fullName>Invertase</fullName>
        <ecNumber>3.2.1.26</ecNumber>
    </recommendedName>
    <alternativeName>
        <fullName>Beta-fructofuranosidase</fullName>
    </alternativeName>
    <alternativeName>
        <fullName>Saccharase</fullName>
    </alternativeName>
</protein>
<keyword id="KW-0325">Glycoprotein</keyword>
<keyword id="KW-0326">Glycosidase</keyword>
<keyword id="KW-0378">Hydrolase</keyword>
<keyword id="KW-1185">Reference proteome</keyword>
<keyword id="KW-0732">Signal</keyword>
<accession>Q9Y746</accession>
<accession>Q6CX83</accession>
<comment type="catalytic activity">
    <reaction evidence="3">
        <text>Hydrolysis of terminal non-reducing beta-D-fructofuranoside residues in beta-D-fructofuranosides.</text>
        <dbReference type="EC" id="3.2.1.26"/>
    </reaction>
</comment>
<comment type="similarity">
    <text evidence="4">Belongs to the glycosyl hydrolase 32 family.</text>
</comment>
<organism>
    <name type="scientific">Kluyveromyces lactis (strain ATCC 8585 / CBS 2359 / DSM 70799 / NBRC 1267 / NRRL Y-1140 / WM37)</name>
    <name type="common">Yeast</name>
    <name type="synonym">Candida sphaerica</name>
    <dbReference type="NCBI Taxonomy" id="284590"/>
    <lineage>
        <taxon>Eukaryota</taxon>
        <taxon>Fungi</taxon>
        <taxon>Dikarya</taxon>
        <taxon>Ascomycota</taxon>
        <taxon>Saccharomycotina</taxon>
        <taxon>Saccharomycetes</taxon>
        <taxon>Saccharomycetales</taxon>
        <taxon>Saccharomycetaceae</taxon>
        <taxon>Kluyveromyces</taxon>
    </lineage>
</organism>
<dbReference type="EC" id="3.2.1.26"/>
<dbReference type="EMBL" id="AF079370">
    <property type="protein sequence ID" value="AAD29850.1"/>
    <property type="molecule type" value="Genomic_DNA"/>
</dbReference>
<dbReference type="EMBL" id="CR382121">
    <property type="protein sequence ID" value="CAH03044.1"/>
    <property type="molecule type" value="Genomic_DNA"/>
</dbReference>
<dbReference type="RefSeq" id="XP_451456.1">
    <property type="nucleotide sequence ID" value="XM_451456.1"/>
</dbReference>
<dbReference type="SMR" id="Q9Y746"/>
<dbReference type="FunCoup" id="Q9Y746">
    <property type="interactions" value="487"/>
</dbReference>
<dbReference type="STRING" id="284590.Q9Y746"/>
<dbReference type="CAZy" id="GH32">
    <property type="family name" value="Glycoside Hydrolase Family 32"/>
</dbReference>
<dbReference type="GlyCosmos" id="Q9Y746">
    <property type="glycosylation" value="24 sites, No reported glycans"/>
</dbReference>
<dbReference type="PaxDb" id="284590-Q9Y746"/>
<dbReference type="KEGG" id="kla:KLLA0_A10417g"/>
<dbReference type="eggNOG" id="KOG0228">
    <property type="taxonomic scope" value="Eukaryota"/>
</dbReference>
<dbReference type="HOGENOM" id="CLU_001528_3_3_1"/>
<dbReference type="InParanoid" id="Q9Y746"/>
<dbReference type="OMA" id="GTEWRHA"/>
<dbReference type="Proteomes" id="UP000000598">
    <property type="component" value="Chromosome A"/>
</dbReference>
<dbReference type="GO" id="GO:0005576">
    <property type="term" value="C:extracellular region"/>
    <property type="evidence" value="ECO:0007669"/>
    <property type="project" value="UniProtKB-ARBA"/>
</dbReference>
<dbReference type="GO" id="GO:0000324">
    <property type="term" value="C:fungal-type vacuole"/>
    <property type="evidence" value="ECO:0007669"/>
    <property type="project" value="TreeGrafter"/>
</dbReference>
<dbReference type="GO" id="GO:0004575">
    <property type="term" value="F:sucrose alpha-glucosidase activity"/>
    <property type="evidence" value="ECO:0007669"/>
    <property type="project" value="TreeGrafter"/>
</dbReference>
<dbReference type="GO" id="GO:0005987">
    <property type="term" value="P:sucrose catabolic process"/>
    <property type="evidence" value="ECO:0007669"/>
    <property type="project" value="TreeGrafter"/>
</dbReference>
<dbReference type="CDD" id="cd18622">
    <property type="entry name" value="GH32_Inu-like"/>
    <property type="match status" value="1"/>
</dbReference>
<dbReference type="Gene3D" id="2.60.120.560">
    <property type="entry name" value="Exo-inulinase, domain 1"/>
    <property type="match status" value="1"/>
</dbReference>
<dbReference type="Gene3D" id="2.115.10.20">
    <property type="entry name" value="Glycosyl hydrolase domain, family 43"/>
    <property type="match status" value="1"/>
</dbReference>
<dbReference type="InterPro" id="IPR013320">
    <property type="entry name" value="ConA-like_dom_sf"/>
</dbReference>
<dbReference type="InterPro" id="IPR001362">
    <property type="entry name" value="Glyco_hydro_32"/>
</dbReference>
<dbReference type="InterPro" id="IPR018053">
    <property type="entry name" value="Glyco_hydro_32_AS"/>
</dbReference>
<dbReference type="InterPro" id="IPR013189">
    <property type="entry name" value="Glyco_hydro_32_C"/>
</dbReference>
<dbReference type="InterPro" id="IPR013148">
    <property type="entry name" value="Glyco_hydro_32_N"/>
</dbReference>
<dbReference type="InterPro" id="IPR023296">
    <property type="entry name" value="Glyco_hydro_beta-prop_sf"/>
</dbReference>
<dbReference type="PANTHER" id="PTHR42800">
    <property type="entry name" value="EXOINULINASE INUD (AFU_ORTHOLOGUE AFUA_5G00480)"/>
    <property type="match status" value="1"/>
</dbReference>
<dbReference type="PANTHER" id="PTHR42800:SF4">
    <property type="entry name" value="INVERTASE 2"/>
    <property type="match status" value="1"/>
</dbReference>
<dbReference type="Pfam" id="PF08244">
    <property type="entry name" value="Glyco_hydro_32C"/>
    <property type="match status" value="1"/>
</dbReference>
<dbReference type="Pfam" id="PF00251">
    <property type="entry name" value="Glyco_hydro_32N"/>
    <property type="match status" value="1"/>
</dbReference>
<dbReference type="SMART" id="SM00640">
    <property type="entry name" value="Glyco_32"/>
    <property type="match status" value="1"/>
</dbReference>
<dbReference type="SUPFAM" id="SSF75005">
    <property type="entry name" value="Arabinanase/levansucrase/invertase"/>
    <property type="match status" value="1"/>
</dbReference>
<dbReference type="SUPFAM" id="SSF49899">
    <property type="entry name" value="Concanavalin A-like lectins/glucanases"/>
    <property type="match status" value="1"/>
</dbReference>
<dbReference type="PROSITE" id="PS00609">
    <property type="entry name" value="GLYCOSYL_HYDROL_F32"/>
    <property type="match status" value="1"/>
</dbReference>
<sequence>MLKLLSLMVPLASAAVIHRRDANISAIASEWNSTSNSSSSLSLNRPAVHYSPEEGWMNDPNGLWYDAKEEDWHIYYQYYPDAPHWGLPLTWGHAVSKDLTVWDEQGVAFGPEFETAGAFSGSMVIDYNNTSGFFNSSTDPRQRVVAIWTLDYSGSETQQLSYSHDGGYTFTEYSDNPVLDIDSDAFRDPKVFWYQGEDSESEGNWVMTVAEADRFSVLIYSSPDLKNWTLESNFSREGYLGYNYECPGLVKVPYVKNTTYASAPGSNITSSGPLHPNSTVSFSNSSSIAWNASSVPLNITLSNSTLVDETSQLEEVGYAWVMIVSFNPGSILGGSGTEYFIGDFNGTHFEPLDKQTRFLDLGKDYYALQTFFNTPNEVDVLGIAWASNWQYANQVPTDPWRSSMSLVRNFTITEYNINSNTTALVLNSQPVLDFTSLRKNGTSYTLENLTLNSSSHEVLEFEDPTGVFEFSLEYSVNFTGIHNWVFTDLSLYFQGDKDSDEYLRLGYEANSKQFFLDRGHSNIPFVQENPFFTQRLSVSNPPSSNSSTFDVYGIVDRNIIELYFNNGTVTSTNTFFFSTGNNIGSIIVKSGVDDVYEIESLKVNQFYVD</sequence>
<gene>
    <name type="primary">INV1</name>
    <name type="ordered locus">KLLA0A10417g</name>
</gene>
<name>INV_KLULA</name>
<reference key="1">
    <citation type="journal article" date="1999" name="Mol. Gen. Genet.">
        <title>Glucose repression of the Kluyveromyces lactis invertase gene KIINV1 does not require Mig1p.</title>
        <authorList>
            <person name="Georis I."/>
            <person name="Cassart J.-P."/>
            <person name="Breunig K.D."/>
            <person name="Vandenhaute J."/>
        </authorList>
    </citation>
    <scope>NUCLEOTIDE SEQUENCE [GENOMIC DNA]</scope>
    <source>
        <strain>ATCC 8585 / CBS 2359 / DSM 70799 / NBRC 1267 / NRRL Y-1140 / WM37</strain>
    </source>
</reference>
<reference key="2">
    <citation type="journal article" date="2004" name="Nature">
        <title>Genome evolution in yeasts.</title>
        <authorList>
            <person name="Dujon B."/>
            <person name="Sherman D."/>
            <person name="Fischer G."/>
            <person name="Durrens P."/>
            <person name="Casaregola S."/>
            <person name="Lafontaine I."/>
            <person name="de Montigny J."/>
            <person name="Marck C."/>
            <person name="Neuveglise C."/>
            <person name="Talla E."/>
            <person name="Goffard N."/>
            <person name="Frangeul L."/>
            <person name="Aigle M."/>
            <person name="Anthouard V."/>
            <person name="Babour A."/>
            <person name="Barbe V."/>
            <person name="Barnay S."/>
            <person name="Blanchin S."/>
            <person name="Beckerich J.-M."/>
            <person name="Beyne E."/>
            <person name="Bleykasten C."/>
            <person name="Boisrame A."/>
            <person name="Boyer J."/>
            <person name="Cattolico L."/>
            <person name="Confanioleri F."/>
            <person name="de Daruvar A."/>
            <person name="Despons L."/>
            <person name="Fabre E."/>
            <person name="Fairhead C."/>
            <person name="Ferry-Dumazet H."/>
            <person name="Groppi A."/>
            <person name="Hantraye F."/>
            <person name="Hennequin C."/>
            <person name="Jauniaux N."/>
            <person name="Joyet P."/>
            <person name="Kachouri R."/>
            <person name="Kerrest A."/>
            <person name="Koszul R."/>
            <person name="Lemaire M."/>
            <person name="Lesur I."/>
            <person name="Ma L."/>
            <person name="Muller H."/>
            <person name="Nicaud J.-M."/>
            <person name="Nikolski M."/>
            <person name="Oztas S."/>
            <person name="Ozier-Kalogeropoulos O."/>
            <person name="Pellenz S."/>
            <person name="Potier S."/>
            <person name="Richard G.-F."/>
            <person name="Straub M.-L."/>
            <person name="Suleau A."/>
            <person name="Swennen D."/>
            <person name="Tekaia F."/>
            <person name="Wesolowski-Louvel M."/>
            <person name="Westhof E."/>
            <person name="Wirth B."/>
            <person name="Zeniou-Meyer M."/>
            <person name="Zivanovic Y."/>
            <person name="Bolotin-Fukuhara M."/>
            <person name="Thierry A."/>
            <person name="Bouchier C."/>
            <person name="Caudron B."/>
            <person name="Scarpelli C."/>
            <person name="Gaillardin C."/>
            <person name="Weissenbach J."/>
            <person name="Wincker P."/>
            <person name="Souciet J.-L."/>
        </authorList>
    </citation>
    <scope>NUCLEOTIDE SEQUENCE [LARGE SCALE GENOMIC DNA]</scope>
    <source>
        <strain>ATCC 8585 / CBS 2359 / DSM 70799 / NBRC 1267 / NRRL Y-1140 / WM37</strain>
    </source>
</reference>
<feature type="signal peptide" evidence="2">
    <location>
        <begin position="1"/>
        <end position="14"/>
    </location>
</feature>
<feature type="chain" id="PRO_0000033396" description="Invertase">
    <location>
        <begin position="15"/>
        <end position="609"/>
    </location>
</feature>
<feature type="active site" evidence="3">
    <location>
        <position position="59"/>
    </location>
</feature>
<feature type="binding site" evidence="1">
    <location>
        <begin position="56"/>
        <end position="59"/>
    </location>
    <ligand>
        <name>substrate</name>
    </ligand>
</feature>
<feature type="binding site" evidence="1">
    <location>
        <position position="77"/>
    </location>
    <ligand>
        <name>substrate</name>
    </ligand>
</feature>
<feature type="binding site" evidence="1">
    <location>
        <begin position="119"/>
        <end position="120"/>
    </location>
    <ligand>
        <name>substrate</name>
    </ligand>
</feature>
<feature type="binding site" evidence="1">
    <location>
        <begin position="187"/>
        <end position="188"/>
    </location>
    <ligand>
        <name>substrate</name>
    </ligand>
</feature>
<feature type="binding site" evidence="1">
    <location>
        <position position="245"/>
    </location>
    <ligand>
        <name>substrate</name>
    </ligand>
</feature>
<feature type="binding site" evidence="1">
    <location>
        <position position="389"/>
    </location>
    <ligand>
        <name>substrate</name>
    </ligand>
</feature>
<feature type="glycosylation site" description="N-linked (GlcNAc...) asparagine" evidence="2">
    <location>
        <position position="23"/>
    </location>
</feature>
<feature type="glycosylation site" description="N-linked (GlcNAc...) asparagine" evidence="2">
    <location>
        <position position="32"/>
    </location>
</feature>
<feature type="glycosylation site" description="N-linked (GlcNAc...) asparagine" evidence="2">
    <location>
        <position position="36"/>
    </location>
</feature>
<feature type="glycosylation site" description="N-linked (GlcNAc...) asparagine" evidence="2">
    <location>
        <position position="128"/>
    </location>
</feature>
<feature type="glycosylation site" description="N-linked (GlcNAc...) asparagine" evidence="2">
    <location>
        <position position="129"/>
    </location>
</feature>
<feature type="glycosylation site" description="N-linked (GlcNAc...) asparagine" evidence="2">
    <location>
        <position position="135"/>
    </location>
</feature>
<feature type="glycosylation site" description="N-linked (GlcNAc...) asparagine" evidence="2">
    <location>
        <position position="227"/>
    </location>
</feature>
<feature type="glycosylation site" description="N-linked (GlcNAc...) asparagine" evidence="2">
    <location>
        <position position="233"/>
    </location>
</feature>
<feature type="glycosylation site" description="N-linked (GlcNAc...) asparagine" evidence="2">
    <location>
        <position position="257"/>
    </location>
</feature>
<feature type="glycosylation site" description="N-linked (GlcNAc...) asparagine" evidence="2">
    <location>
        <position position="267"/>
    </location>
</feature>
<feature type="glycosylation site" description="N-linked (GlcNAc...) asparagine" evidence="2">
    <location>
        <position position="277"/>
    </location>
</feature>
<feature type="glycosylation site" description="N-linked (GlcNAc...) asparagine" evidence="2">
    <location>
        <position position="284"/>
    </location>
</feature>
<feature type="glycosylation site" description="N-linked (GlcNAc...) asparagine" evidence="2">
    <location>
        <position position="291"/>
    </location>
</feature>
<feature type="glycosylation site" description="N-linked (GlcNAc...) asparagine" evidence="2">
    <location>
        <position position="298"/>
    </location>
</feature>
<feature type="glycosylation site" description="N-linked (GlcNAc...) asparagine" evidence="2">
    <location>
        <position position="303"/>
    </location>
</feature>
<feature type="glycosylation site" description="N-linked (GlcNAc...) asparagine" evidence="2">
    <location>
        <position position="345"/>
    </location>
</feature>
<feature type="glycosylation site" description="N-linked (GlcNAc...) asparagine" evidence="2">
    <location>
        <position position="409"/>
    </location>
</feature>
<feature type="glycosylation site" description="N-linked (GlcNAc...) asparagine" evidence="2">
    <location>
        <position position="420"/>
    </location>
</feature>
<feature type="glycosylation site" description="N-linked (GlcNAc...) asparagine" evidence="2">
    <location>
        <position position="440"/>
    </location>
</feature>
<feature type="glycosylation site" description="N-linked (GlcNAc...) asparagine" evidence="2">
    <location>
        <position position="448"/>
    </location>
</feature>
<feature type="glycosylation site" description="N-linked (GlcNAc...) asparagine" evidence="2">
    <location>
        <position position="452"/>
    </location>
</feature>
<feature type="glycosylation site" description="N-linked (GlcNAc...) asparagine" evidence="2">
    <location>
        <position position="477"/>
    </location>
</feature>
<feature type="glycosylation site" description="N-linked (GlcNAc...) asparagine" evidence="2">
    <location>
        <position position="545"/>
    </location>
</feature>
<feature type="glycosylation site" description="N-linked (GlcNAc...) asparagine" evidence="2">
    <location>
        <position position="566"/>
    </location>
</feature>
<proteinExistence type="inferred from homology"/>